<gene>
    <name evidence="1" type="primary">atpB</name>
    <name type="ordered locus">CLM_2988</name>
</gene>
<proteinExistence type="inferred from homology"/>
<comment type="function">
    <text evidence="1">Produces ATP from ADP in the presence of a proton gradient across the membrane. The V-type beta chain is a regulatory subunit.</text>
</comment>
<comment type="similarity">
    <text evidence="1">Belongs to the ATPase alpha/beta chains family.</text>
</comment>
<evidence type="ECO:0000255" key="1">
    <source>
        <dbReference type="HAMAP-Rule" id="MF_00310"/>
    </source>
</evidence>
<accession>C1FTN6</accession>
<reference key="1">
    <citation type="submission" date="2008-10" db="EMBL/GenBank/DDBJ databases">
        <title>Genome sequence of Clostridium botulinum A2 Kyoto.</title>
        <authorList>
            <person name="Shrivastava S."/>
            <person name="Brinkac L.M."/>
            <person name="Brown J.L."/>
            <person name="Bruce D."/>
            <person name="Detter C.C."/>
            <person name="Johnson E.A."/>
            <person name="Munk C.A."/>
            <person name="Smith L.A."/>
            <person name="Smith T.J."/>
            <person name="Sutton G."/>
            <person name="Brettin T.S."/>
        </authorList>
    </citation>
    <scope>NUCLEOTIDE SEQUENCE [LARGE SCALE GENOMIC DNA]</scope>
    <source>
        <strain>Kyoto / Type A2</strain>
    </source>
</reference>
<name>VATB_CLOBJ</name>
<sequence>MLKEYRTVKEVVGPLMLVDQVESVSFDELVEIELHNGEKRRGRVLEINKDKALVQLFEGSAGINIKGAKVKFLGKPLELGVSEDMLGRVFDGLGNPKDGGPKIIADEKRDISGIPINPVARNYPDEFIQTGVSAIDGLNTLVRGQKLPVFSGSGLPHAELAAQIARQAKVLKSDSKFAVVFAAIGTTFEEAQYFIDDFTKTGAIDRAVLFINLANDPAIERIATPRMALTAAEYLAFEKGMHVLVIMTDITNYCEALREVSAARKEVPGRRGYPGYLYTDLSTIYERAGRILGKEGSITQIPILTMPEDDKTHPIPDLTGYITEGQIILSRELYKKGIMPPIDVLPSLSRLKDKGIGKEKTREDHADTMNQLFAAYAQGKQAKELSVILGESALSDTDKLYAKFADAFEEEYVSQGFTTNRTIEETLNLGWKLLTILPKSELKRIRDEYLEKYLNKAEESK</sequence>
<keyword id="KW-0066">ATP synthesis</keyword>
<keyword id="KW-0375">Hydrogen ion transport</keyword>
<keyword id="KW-0406">Ion transport</keyword>
<keyword id="KW-0813">Transport</keyword>
<feature type="chain" id="PRO_1000132887" description="V-type ATP synthase beta chain">
    <location>
        <begin position="1"/>
        <end position="461"/>
    </location>
</feature>
<organism>
    <name type="scientific">Clostridium botulinum (strain Kyoto / Type A2)</name>
    <dbReference type="NCBI Taxonomy" id="536232"/>
    <lineage>
        <taxon>Bacteria</taxon>
        <taxon>Bacillati</taxon>
        <taxon>Bacillota</taxon>
        <taxon>Clostridia</taxon>
        <taxon>Eubacteriales</taxon>
        <taxon>Clostridiaceae</taxon>
        <taxon>Clostridium</taxon>
    </lineage>
</organism>
<dbReference type="EMBL" id="CP001581">
    <property type="protein sequence ID" value="ACO86573.1"/>
    <property type="molecule type" value="Genomic_DNA"/>
</dbReference>
<dbReference type="RefSeq" id="WP_012705391.1">
    <property type="nucleotide sequence ID" value="NC_012563.1"/>
</dbReference>
<dbReference type="SMR" id="C1FTN6"/>
<dbReference type="KEGG" id="cby:CLM_2988"/>
<dbReference type="eggNOG" id="COG1156">
    <property type="taxonomic scope" value="Bacteria"/>
</dbReference>
<dbReference type="HOGENOM" id="CLU_022916_0_0_9"/>
<dbReference type="Proteomes" id="UP000001374">
    <property type="component" value="Chromosome"/>
</dbReference>
<dbReference type="GO" id="GO:0005524">
    <property type="term" value="F:ATP binding"/>
    <property type="evidence" value="ECO:0007669"/>
    <property type="project" value="UniProtKB-UniRule"/>
</dbReference>
<dbReference type="GO" id="GO:0046933">
    <property type="term" value="F:proton-transporting ATP synthase activity, rotational mechanism"/>
    <property type="evidence" value="ECO:0007669"/>
    <property type="project" value="UniProtKB-UniRule"/>
</dbReference>
<dbReference type="GO" id="GO:0042777">
    <property type="term" value="P:proton motive force-driven plasma membrane ATP synthesis"/>
    <property type="evidence" value="ECO:0007669"/>
    <property type="project" value="UniProtKB-UniRule"/>
</dbReference>
<dbReference type="CDD" id="cd18112">
    <property type="entry name" value="ATP-synt_V_A-type_beta_C"/>
    <property type="match status" value="1"/>
</dbReference>
<dbReference type="CDD" id="cd18118">
    <property type="entry name" value="ATP-synt_V_A-type_beta_N"/>
    <property type="match status" value="1"/>
</dbReference>
<dbReference type="CDD" id="cd01135">
    <property type="entry name" value="V_A-ATPase_B"/>
    <property type="match status" value="1"/>
</dbReference>
<dbReference type="Gene3D" id="3.40.50.12240">
    <property type="match status" value="1"/>
</dbReference>
<dbReference type="HAMAP" id="MF_00310">
    <property type="entry name" value="ATP_synth_B_arch"/>
    <property type="match status" value="1"/>
</dbReference>
<dbReference type="InterPro" id="IPR055190">
    <property type="entry name" value="ATP-synt_VA_C"/>
</dbReference>
<dbReference type="InterPro" id="IPR020003">
    <property type="entry name" value="ATPase_a/bsu_AS"/>
</dbReference>
<dbReference type="InterPro" id="IPR004100">
    <property type="entry name" value="ATPase_F1/V1/A1_a/bsu_N"/>
</dbReference>
<dbReference type="InterPro" id="IPR000194">
    <property type="entry name" value="ATPase_F1/V1/A1_a/bsu_nucl-bd"/>
</dbReference>
<dbReference type="InterPro" id="IPR027417">
    <property type="entry name" value="P-loop_NTPase"/>
</dbReference>
<dbReference type="InterPro" id="IPR022879">
    <property type="entry name" value="V-ATPase_su_B/beta"/>
</dbReference>
<dbReference type="NCBIfam" id="NF003235">
    <property type="entry name" value="PRK04196.1"/>
    <property type="match status" value="1"/>
</dbReference>
<dbReference type="PANTHER" id="PTHR43389">
    <property type="entry name" value="V-TYPE PROTON ATPASE SUBUNIT B"/>
    <property type="match status" value="1"/>
</dbReference>
<dbReference type="PANTHER" id="PTHR43389:SF4">
    <property type="entry name" value="V-TYPE PROTON ATPASE SUBUNIT B"/>
    <property type="match status" value="1"/>
</dbReference>
<dbReference type="Pfam" id="PF00006">
    <property type="entry name" value="ATP-synt_ab"/>
    <property type="match status" value="1"/>
</dbReference>
<dbReference type="Pfam" id="PF02874">
    <property type="entry name" value="ATP-synt_ab_N"/>
    <property type="match status" value="1"/>
</dbReference>
<dbReference type="Pfam" id="PF22919">
    <property type="entry name" value="ATP-synt_VA_C"/>
    <property type="match status" value="1"/>
</dbReference>
<dbReference type="PIRSF" id="PIRSF039114">
    <property type="entry name" value="V-ATPsynth_beta/V-ATPase_B"/>
    <property type="match status" value="1"/>
</dbReference>
<dbReference type="SUPFAM" id="SSF47917">
    <property type="entry name" value="C-terminal domain of alpha and beta subunits of F1 ATP synthase"/>
    <property type="match status" value="1"/>
</dbReference>
<dbReference type="SUPFAM" id="SSF52540">
    <property type="entry name" value="P-loop containing nucleoside triphosphate hydrolases"/>
    <property type="match status" value="1"/>
</dbReference>
<dbReference type="PROSITE" id="PS00152">
    <property type="entry name" value="ATPASE_ALPHA_BETA"/>
    <property type="match status" value="1"/>
</dbReference>
<protein>
    <recommendedName>
        <fullName evidence="1">V-type ATP synthase beta chain</fullName>
    </recommendedName>
    <alternativeName>
        <fullName evidence="1">V-ATPase subunit B</fullName>
    </alternativeName>
</protein>